<dbReference type="EMBL" id="X86404">
    <property type="protein sequence ID" value="CAA60158.1"/>
    <property type="molecule type" value="Genomic_DNA"/>
</dbReference>
<dbReference type="PIR" id="JC4249">
    <property type="entry name" value="JC4249"/>
</dbReference>
<dbReference type="SMR" id="P49997"/>
<dbReference type="GO" id="GO:0005737">
    <property type="term" value="C:cytoplasm"/>
    <property type="evidence" value="ECO:0007669"/>
    <property type="project" value="UniProtKB-SubCell"/>
</dbReference>
<dbReference type="GO" id="GO:0005524">
    <property type="term" value="F:ATP binding"/>
    <property type="evidence" value="ECO:0007669"/>
    <property type="project" value="UniProtKB-UniRule"/>
</dbReference>
<dbReference type="GO" id="GO:0003697">
    <property type="term" value="F:single-stranded DNA binding"/>
    <property type="evidence" value="ECO:0007669"/>
    <property type="project" value="UniProtKB-UniRule"/>
</dbReference>
<dbReference type="GO" id="GO:0006260">
    <property type="term" value="P:DNA replication"/>
    <property type="evidence" value="ECO:0007669"/>
    <property type="project" value="UniProtKB-UniRule"/>
</dbReference>
<dbReference type="GO" id="GO:0000731">
    <property type="term" value="P:DNA synthesis involved in DNA repair"/>
    <property type="evidence" value="ECO:0007669"/>
    <property type="project" value="TreeGrafter"/>
</dbReference>
<dbReference type="GO" id="GO:0006302">
    <property type="term" value="P:double-strand break repair"/>
    <property type="evidence" value="ECO:0007669"/>
    <property type="project" value="TreeGrafter"/>
</dbReference>
<dbReference type="GO" id="GO:0009432">
    <property type="term" value="P:SOS response"/>
    <property type="evidence" value="ECO:0007669"/>
    <property type="project" value="UniProtKB-UniRule"/>
</dbReference>
<dbReference type="Gene3D" id="1.20.1050.90">
    <property type="entry name" value="RecF/RecN/SMC, N-terminal domain"/>
    <property type="match status" value="1"/>
</dbReference>
<dbReference type="HAMAP" id="MF_00365">
    <property type="entry name" value="RecF"/>
    <property type="match status" value="1"/>
</dbReference>
<dbReference type="InterPro" id="IPR001238">
    <property type="entry name" value="DNA-binding_RecF"/>
</dbReference>
<dbReference type="InterPro" id="IPR018078">
    <property type="entry name" value="DNA-binding_RecF_CS"/>
</dbReference>
<dbReference type="InterPro" id="IPR027417">
    <property type="entry name" value="P-loop_NTPase"/>
</dbReference>
<dbReference type="InterPro" id="IPR003395">
    <property type="entry name" value="RecF/RecN/SMC_N"/>
</dbReference>
<dbReference type="InterPro" id="IPR042174">
    <property type="entry name" value="RecF_2"/>
</dbReference>
<dbReference type="PANTHER" id="PTHR32182">
    <property type="entry name" value="DNA REPLICATION AND REPAIR PROTEIN RECF"/>
    <property type="match status" value="1"/>
</dbReference>
<dbReference type="PANTHER" id="PTHR32182:SF0">
    <property type="entry name" value="DNA REPLICATION AND REPAIR PROTEIN RECF"/>
    <property type="match status" value="1"/>
</dbReference>
<dbReference type="Pfam" id="PF02463">
    <property type="entry name" value="SMC_N"/>
    <property type="match status" value="1"/>
</dbReference>
<dbReference type="SUPFAM" id="SSF52540">
    <property type="entry name" value="P-loop containing nucleoside triphosphate hydrolases"/>
    <property type="match status" value="1"/>
</dbReference>
<dbReference type="PROSITE" id="PS00617">
    <property type="entry name" value="RECF_1"/>
    <property type="match status" value="1"/>
</dbReference>
<dbReference type="PROSITE" id="PS00618">
    <property type="entry name" value="RECF_2"/>
    <property type="match status" value="1"/>
</dbReference>
<proteinExistence type="inferred from homology"/>
<gene>
    <name type="primary">recF</name>
</gene>
<evidence type="ECO:0000250" key="1"/>
<evidence type="ECO:0000255" key="2"/>
<evidence type="ECO:0000256" key="3">
    <source>
        <dbReference type="SAM" id="MobiDB-lite"/>
    </source>
</evidence>
<evidence type="ECO:0000305" key="4"/>
<comment type="function">
    <text>The RecF protein is involved in DNA metabolism; it is required for DNA replication and normal SOS inducibility. RecF binds preferentially to single-stranded, linear DNA. It also seems to bind ATP.</text>
</comment>
<comment type="subcellular location">
    <subcellularLocation>
        <location evidence="1">Cytoplasm</location>
    </subcellularLocation>
</comment>
<comment type="similarity">
    <text evidence="4">Belongs to the RecF family.</text>
</comment>
<comment type="caution">
    <text evidence="4">This entry seems to be produced by an incorrect sequence that contains at least 14 frameshifts. Do not use it for any phylogenetic purpose.</text>
</comment>
<feature type="chain" id="PRO_0000196393" description="DNA replication and repair protein RecF">
    <location>
        <begin position="1"/>
        <end position="364"/>
    </location>
</feature>
<feature type="region of interest" description="Disordered" evidence="3">
    <location>
        <begin position="345"/>
        <end position="364"/>
    </location>
</feature>
<feature type="binding site" evidence="2">
    <location>
        <begin position="43"/>
        <end position="50"/>
    </location>
    <ligand>
        <name>ATP</name>
        <dbReference type="ChEBI" id="CHEBI:30616"/>
    </ligand>
</feature>
<accession>P49997</accession>
<organism>
    <name type="scientific">Azotobacter vinelandii</name>
    <dbReference type="NCBI Taxonomy" id="354"/>
    <lineage>
        <taxon>Bacteria</taxon>
        <taxon>Pseudomonadati</taxon>
        <taxon>Pseudomonadota</taxon>
        <taxon>Gammaproteobacteria</taxon>
        <taxon>Pseudomonadales</taxon>
        <taxon>Pseudomonadaceae</taxon>
        <taxon>Azotobacter</taxon>
    </lineage>
</organism>
<name>RECF_AZOVI</name>
<sequence length="364" mass="42016">MYGFRLCRPCRCGCKPATPPRCPSAVTVTRCVTSARVNQYISGPNGSGKRPAYWRRSTCSAWQLSSFRSQRLSPVIQHEQPACTVFGQVLWNDGRVRNLGVARNRLGELQIRIDGQNVRSAAQLAESLPLQLINPDSFRLLEGAPKVRRQFLDWGVFHVEQRFLPAWDRLQTALRQRNSWLRHGRIDPVSQAAWDRELCLRRSDSELLRAGRERCSARFLLLPFRAISNWGIPRRPQRADRRRRLARTMPRTCCRAVTRSWWSVRLKIAQGHLVDRARRECIYLVDDLPSELDEQHRRALCRLLEELHCQVFITCVDLEALREGWRTDTPVALFHVNRALITQPTIGSEGNDRKPTYDSSSIKS</sequence>
<reference key="1">
    <citation type="journal article" date="1995" name="Gene">
        <title>Molecular characterization of the Azotobacter vinelandii recF gene.</title>
        <authorList>
            <person name="Badran H."/>
            <person name="Venkatesh T.V."/>
            <person name="Kunnimalaiyaan M."/>
            <person name="Sharma N."/>
            <person name="Das H.K."/>
        </authorList>
    </citation>
    <scope>NUCLEOTIDE SEQUENCE [GENOMIC DNA]</scope>
    <source>
        <strain>ATCC 13705 / OP1 / DSM 366 / NCIMB 11614 / LMG 3878 / UW</strain>
    </source>
</reference>
<protein>
    <recommendedName>
        <fullName>DNA replication and repair protein RecF</fullName>
    </recommendedName>
</protein>
<keyword id="KW-0067">ATP-binding</keyword>
<keyword id="KW-0963">Cytoplasm</keyword>
<keyword id="KW-0227">DNA damage</keyword>
<keyword id="KW-0234">DNA repair</keyword>
<keyword id="KW-0235">DNA replication</keyword>
<keyword id="KW-0238">DNA-binding</keyword>
<keyword id="KW-0547">Nucleotide-binding</keyword>
<keyword id="KW-0742">SOS response</keyword>